<keyword id="KW-0963">Cytoplasm</keyword>
<keyword id="KW-0324">Glycolysis</keyword>
<keyword id="KW-0456">Lyase</keyword>
<keyword id="KW-0460">Magnesium</keyword>
<keyword id="KW-0479">Metal-binding</keyword>
<keyword id="KW-0964">Secreted</keyword>
<protein>
    <recommendedName>
        <fullName evidence="1">Enolase</fullName>
        <ecNumber evidence="1">4.2.1.11</ecNumber>
    </recommendedName>
    <alternativeName>
        <fullName evidence="1">2-phospho-D-glycerate hydro-lyase</fullName>
    </alternativeName>
    <alternativeName>
        <fullName evidence="1">2-phosphoglycerate dehydratase</fullName>
    </alternativeName>
</protein>
<sequence>MSTIIDIIGREVLDSRGNPTVEATAVLESGVVASAIVPSGASTGANEALELRDGDKKRFLGKGVLKAVENINTKIADLLIGEESEDQVRIDRLMIEADGTENKSNLGANAILAVSLAVARATAIEKEMPLYRYLGGVNAKVLPVPLMNVINGGAHADNELDFQEFMIVPVCGGSFKEALRAGVETFHVLKSVLKEKGYSTNVGDEGGFAPALRETKEALDMLMLAIDKAGYTPGEDIFIALDAASSEFYKDGKYLFEKRELTSDDMIILYEEIVGTYPVISIEDGLAENDWEGWKNLTQALGNKVQLVGDDLFTTNPKIIKEGIKNNIANSVLIKLNQIGTLTETLDAIEMARINNYTAIISHRSGESEDTFIADLAVATNAGQIKTGSASRTDRVAKYNQLIRIEEELGENAIFKGKQAFKKFQFEE</sequence>
<proteinExistence type="inferred from homology"/>
<comment type="function">
    <text evidence="1">Catalyzes the reversible conversion of 2-phosphoglycerate (2-PG) into phosphoenolpyruvate (PEP). It is essential for the degradation of carbohydrates via glycolysis.</text>
</comment>
<comment type="catalytic activity">
    <reaction evidence="1">
        <text>(2R)-2-phosphoglycerate = phosphoenolpyruvate + H2O</text>
        <dbReference type="Rhea" id="RHEA:10164"/>
        <dbReference type="ChEBI" id="CHEBI:15377"/>
        <dbReference type="ChEBI" id="CHEBI:58289"/>
        <dbReference type="ChEBI" id="CHEBI:58702"/>
        <dbReference type="EC" id="4.2.1.11"/>
    </reaction>
</comment>
<comment type="cofactor">
    <cofactor evidence="1">
        <name>Mg(2+)</name>
        <dbReference type="ChEBI" id="CHEBI:18420"/>
    </cofactor>
    <text evidence="1">Binds a second Mg(2+) ion via substrate during catalysis.</text>
</comment>
<comment type="pathway">
    <text evidence="1">Carbohydrate degradation; glycolysis; pyruvate from D-glyceraldehyde 3-phosphate: step 4/5.</text>
</comment>
<comment type="subcellular location">
    <subcellularLocation>
        <location evidence="1">Cytoplasm</location>
    </subcellularLocation>
    <subcellularLocation>
        <location evidence="1">Secreted</location>
    </subcellularLocation>
    <subcellularLocation>
        <location evidence="1">Cell surface</location>
    </subcellularLocation>
    <text evidence="1">Fractions of enolase are present in both the cytoplasm and on the cell surface.</text>
</comment>
<comment type="similarity">
    <text evidence="1">Belongs to the enolase family.</text>
</comment>
<dbReference type="EC" id="4.2.1.11" evidence="1"/>
<dbReference type="EMBL" id="CP001080">
    <property type="protein sequence ID" value="ACD66661.1"/>
    <property type="molecule type" value="Genomic_DNA"/>
</dbReference>
<dbReference type="RefSeq" id="WP_012459730.1">
    <property type="nucleotide sequence ID" value="NC_010730.1"/>
</dbReference>
<dbReference type="SMR" id="B2V9N8"/>
<dbReference type="STRING" id="436114.SYO3AOP1_1042"/>
<dbReference type="KEGG" id="sul:SYO3AOP1_1042"/>
<dbReference type="eggNOG" id="COG0148">
    <property type="taxonomic scope" value="Bacteria"/>
</dbReference>
<dbReference type="HOGENOM" id="CLU_031223_2_1_0"/>
<dbReference type="UniPathway" id="UPA00109">
    <property type="reaction ID" value="UER00187"/>
</dbReference>
<dbReference type="GO" id="GO:0009986">
    <property type="term" value="C:cell surface"/>
    <property type="evidence" value="ECO:0007669"/>
    <property type="project" value="UniProtKB-SubCell"/>
</dbReference>
<dbReference type="GO" id="GO:0005576">
    <property type="term" value="C:extracellular region"/>
    <property type="evidence" value="ECO:0007669"/>
    <property type="project" value="UniProtKB-SubCell"/>
</dbReference>
<dbReference type="GO" id="GO:0000015">
    <property type="term" value="C:phosphopyruvate hydratase complex"/>
    <property type="evidence" value="ECO:0007669"/>
    <property type="project" value="InterPro"/>
</dbReference>
<dbReference type="GO" id="GO:0000287">
    <property type="term" value="F:magnesium ion binding"/>
    <property type="evidence" value="ECO:0007669"/>
    <property type="project" value="UniProtKB-UniRule"/>
</dbReference>
<dbReference type="GO" id="GO:0004634">
    <property type="term" value="F:phosphopyruvate hydratase activity"/>
    <property type="evidence" value="ECO:0007669"/>
    <property type="project" value="UniProtKB-UniRule"/>
</dbReference>
<dbReference type="GO" id="GO:0006096">
    <property type="term" value="P:glycolytic process"/>
    <property type="evidence" value="ECO:0007669"/>
    <property type="project" value="UniProtKB-UniRule"/>
</dbReference>
<dbReference type="CDD" id="cd03313">
    <property type="entry name" value="enolase"/>
    <property type="match status" value="1"/>
</dbReference>
<dbReference type="FunFam" id="3.20.20.120:FF:000001">
    <property type="entry name" value="Enolase"/>
    <property type="match status" value="1"/>
</dbReference>
<dbReference type="FunFam" id="3.30.390.10:FF:000001">
    <property type="entry name" value="Enolase"/>
    <property type="match status" value="1"/>
</dbReference>
<dbReference type="Gene3D" id="3.20.20.120">
    <property type="entry name" value="Enolase-like C-terminal domain"/>
    <property type="match status" value="1"/>
</dbReference>
<dbReference type="Gene3D" id="3.30.390.10">
    <property type="entry name" value="Enolase-like, N-terminal domain"/>
    <property type="match status" value="1"/>
</dbReference>
<dbReference type="HAMAP" id="MF_00318">
    <property type="entry name" value="Enolase"/>
    <property type="match status" value="1"/>
</dbReference>
<dbReference type="InterPro" id="IPR000941">
    <property type="entry name" value="Enolase"/>
</dbReference>
<dbReference type="InterPro" id="IPR036849">
    <property type="entry name" value="Enolase-like_C_sf"/>
</dbReference>
<dbReference type="InterPro" id="IPR029017">
    <property type="entry name" value="Enolase-like_N"/>
</dbReference>
<dbReference type="InterPro" id="IPR020810">
    <property type="entry name" value="Enolase_C"/>
</dbReference>
<dbReference type="InterPro" id="IPR020809">
    <property type="entry name" value="Enolase_CS"/>
</dbReference>
<dbReference type="InterPro" id="IPR020811">
    <property type="entry name" value="Enolase_N"/>
</dbReference>
<dbReference type="NCBIfam" id="TIGR01060">
    <property type="entry name" value="eno"/>
    <property type="match status" value="1"/>
</dbReference>
<dbReference type="PANTHER" id="PTHR11902">
    <property type="entry name" value="ENOLASE"/>
    <property type="match status" value="1"/>
</dbReference>
<dbReference type="PANTHER" id="PTHR11902:SF1">
    <property type="entry name" value="ENOLASE"/>
    <property type="match status" value="1"/>
</dbReference>
<dbReference type="Pfam" id="PF00113">
    <property type="entry name" value="Enolase_C"/>
    <property type="match status" value="1"/>
</dbReference>
<dbReference type="Pfam" id="PF03952">
    <property type="entry name" value="Enolase_N"/>
    <property type="match status" value="1"/>
</dbReference>
<dbReference type="PIRSF" id="PIRSF001400">
    <property type="entry name" value="Enolase"/>
    <property type="match status" value="1"/>
</dbReference>
<dbReference type="PRINTS" id="PR00148">
    <property type="entry name" value="ENOLASE"/>
</dbReference>
<dbReference type="SFLD" id="SFLDF00002">
    <property type="entry name" value="enolase"/>
    <property type="match status" value="1"/>
</dbReference>
<dbReference type="SFLD" id="SFLDG00178">
    <property type="entry name" value="enolase"/>
    <property type="match status" value="1"/>
</dbReference>
<dbReference type="SMART" id="SM01192">
    <property type="entry name" value="Enolase_C"/>
    <property type="match status" value="1"/>
</dbReference>
<dbReference type="SMART" id="SM01193">
    <property type="entry name" value="Enolase_N"/>
    <property type="match status" value="1"/>
</dbReference>
<dbReference type="SUPFAM" id="SSF51604">
    <property type="entry name" value="Enolase C-terminal domain-like"/>
    <property type="match status" value="1"/>
</dbReference>
<dbReference type="SUPFAM" id="SSF54826">
    <property type="entry name" value="Enolase N-terminal domain-like"/>
    <property type="match status" value="1"/>
</dbReference>
<dbReference type="PROSITE" id="PS00164">
    <property type="entry name" value="ENOLASE"/>
    <property type="match status" value="1"/>
</dbReference>
<evidence type="ECO:0000255" key="1">
    <source>
        <dbReference type="HAMAP-Rule" id="MF_00318"/>
    </source>
</evidence>
<name>ENO_SULSY</name>
<gene>
    <name evidence="1" type="primary">eno</name>
    <name type="ordered locus">SYO3AOP1_1042</name>
</gene>
<organism>
    <name type="scientific">Sulfurihydrogenibium sp. (strain YO3AOP1)</name>
    <dbReference type="NCBI Taxonomy" id="436114"/>
    <lineage>
        <taxon>Bacteria</taxon>
        <taxon>Pseudomonadati</taxon>
        <taxon>Aquificota</taxon>
        <taxon>Aquificia</taxon>
        <taxon>Aquificales</taxon>
        <taxon>Hydrogenothermaceae</taxon>
        <taxon>Sulfurihydrogenibium</taxon>
    </lineage>
</organism>
<reference key="1">
    <citation type="journal article" date="2009" name="J. Bacteriol.">
        <title>Complete and draft genome sequences of six members of the Aquificales.</title>
        <authorList>
            <person name="Reysenbach A.-L."/>
            <person name="Hamamura N."/>
            <person name="Podar M."/>
            <person name="Griffiths E."/>
            <person name="Ferreira S."/>
            <person name="Hochstein R."/>
            <person name="Heidelberg J."/>
            <person name="Johnson J."/>
            <person name="Mead D."/>
            <person name="Pohorille A."/>
            <person name="Sarmiento M."/>
            <person name="Schweighofer K."/>
            <person name="Seshadri R."/>
            <person name="Voytek M.A."/>
        </authorList>
    </citation>
    <scope>NUCLEOTIDE SEQUENCE [LARGE SCALE GENOMIC DNA]</scope>
    <source>
        <strain>YO3AOP1</strain>
    </source>
</reference>
<accession>B2V9N8</accession>
<feature type="chain" id="PRO_1000115923" description="Enolase">
    <location>
        <begin position="1"/>
        <end position="428"/>
    </location>
</feature>
<feature type="active site" description="Proton donor" evidence="1">
    <location>
        <position position="205"/>
    </location>
</feature>
<feature type="active site" description="Proton acceptor" evidence="1">
    <location>
        <position position="335"/>
    </location>
</feature>
<feature type="binding site" evidence="1">
    <location>
        <position position="163"/>
    </location>
    <ligand>
        <name>(2R)-2-phosphoglycerate</name>
        <dbReference type="ChEBI" id="CHEBI:58289"/>
    </ligand>
</feature>
<feature type="binding site" evidence="1">
    <location>
        <position position="242"/>
    </location>
    <ligand>
        <name>Mg(2+)</name>
        <dbReference type="ChEBI" id="CHEBI:18420"/>
    </ligand>
</feature>
<feature type="binding site" evidence="1">
    <location>
        <position position="283"/>
    </location>
    <ligand>
        <name>Mg(2+)</name>
        <dbReference type="ChEBI" id="CHEBI:18420"/>
    </ligand>
</feature>
<feature type="binding site" evidence="1">
    <location>
        <position position="310"/>
    </location>
    <ligand>
        <name>Mg(2+)</name>
        <dbReference type="ChEBI" id="CHEBI:18420"/>
    </ligand>
</feature>
<feature type="binding site" evidence="1">
    <location>
        <position position="335"/>
    </location>
    <ligand>
        <name>(2R)-2-phosphoglycerate</name>
        <dbReference type="ChEBI" id="CHEBI:58289"/>
    </ligand>
</feature>
<feature type="binding site" evidence="1">
    <location>
        <position position="364"/>
    </location>
    <ligand>
        <name>(2R)-2-phosphoglycerate</name>
        <dbReference type="ChEBI" id="CHEBI:58289"/>
    </ligand>
</feature>
<feature type="binding site" evidence="1">
    <location>
        <position position="365"/>
    </location>
    <ligand>
        <name>(2R)-2-phosphoglycerate</name>
        <dbReference type="ChEBI" id="CHEBI:58289"/>
    </ligand>
</feature>
<feature type="binding site" evidence="1">
    <location>
        <position position="386"/>
    </location>
    <ligand>
        <name>(2R)-2-phosphoglycerate</name>
        <dbReference type="ChEBI" id="CHEBI:58289"/>
    </ligand>
</feature>